<reference key="1">
    <citation type="journal article" date="2007" name="PLoS ONE">
        <title>A glimpse of streptococcal toxic shock syndrome from comparative genomics of S. suis 2 Chinese isolates.</title>
        <authorList>
            <person name="Chen C."/>
            <person name="Tang J."/>
            <person name="Dong W."/>
            <person name="Wang C."/>
            <person name="Feng Y."/>
            <person name="Wang J."/>
            <person name="Zheng F."/>
            <person name="Pan X."/>
            <person name="Liu D."/>
            <person name="Li M."/>
            <person name="Song Y."/>
            <person name="Zhu X."/>
            <person name="Sun H."/>
            <person name="Feng T."/>
            <person name="Guo Z."/>
            <person name="Ju A."/>
            <person name="Ge J."/>
            <person name="Dong Y."/>
            <person name="Sun W."/>
            <person name="Jiang Y."/>
            <person name="Wang J."/>
            <person name="Yan J."/>
            <person name="Yang H."/>
            <person name="Wang X."/>
            <person name="Gao G.F."/>
            <person name="Yang R."/>
            <person name="Wang J."/>
            <person name="Yu J."/>
        </authorList>
    </citation>
    <scope>NUCLEOTIDE SEQUENCE [LARGE SCALE GENOMIC DNA]</scope>
    <source>
        <strain>98HAH33</strain>
    </source>
</reference>
<evidence type="ECO:0000255" key="1">
    <source>
        <dbReference type="HAMAP-Rule" id="MF_00365"/>
    </source>
</evidence>
<feature type="chain" id="PRO_1000048589" description="DNA replication and repair protein RecF">
    <location>
        <begin position="1"/>
        <end position="364"/>
    </location>
</feature>
<feature type="binding site" evidence="1">
    <location>
        <begin position="30"/>
        <end position="37"/>
    </location>
    <ligand>
        <name>ATP</name>
        <dbReference type="ChEBI" id="CHEBI:30616"/>
    </ligand>
</feature>
<sequence>MWLERLELQHFRNYNQLDIEFHKGLNVFLGENAQGKTNILESIYVLALTRSHRTRTDKDLLQFQEKELSISGLLHRTSGKVPLDIHLTDKGRVTKVNHLKQAKLSNYIGHMNVVLFAPEDLQLIKGAPALRRKFIDVELGQIKPLYLSDLSNYNHVLKQRNTYLKSTDKIDENFLSVLDQQLAEYGSRVIQHRIDFLKKLEEFGNRKVQEISGNREELTIEYQTSIELTDDVNLIDKFLTELEKSRKRDLFKKNTGVGPHRDDVAFFINGMNAHYASQGQHRSLVLSLKLAEIELMKEVTREYPILLLDDVMSELDNNRQIKLLETITDTIQTFITTTSLDHLHKLPDSLKIFHIESGKVTESE</sequence>
<name>RECF_STRS2</name>
<comment type="function">
    <text evidence="1">The RecF protein is involved in DNA metabolism; it is required for DNA replication and normal SOS inducibility. RecF binds preferentially to single-stranded, linear DNA. It also seems to bind ATP.</text>
</comment>
<comment type="subcellular location">
    <subcellularLocation>
        <location evidence="1">Cytoplasm</location>
    </subcellularLocation>
</comment>
<comment type="similarity">
    <text evidence="1">Belongs to the RecF family.</text>
</comment>
<gene>
    <name evidence="1" type="primary">recF</name>
    <name type="ordered locus">SSU98_2180</name>
</gene>
<keyword id="KW-0067">ATP-binding</keyword>
<keyword id="KW-0963">Cytoplasm</keyword>
<keyword id="KW-0227">DNA damage</keyword>
<keyword id="KW-0234">DNA repair</keyword>
<keyword id="KW-0235">DNA replication</keyword>
<keyword id="KW-0238">DNA-binding</keyword>
<keyword id="KW-0547">Nucleotide-binding</keyword>
<keyword id="KW-0742">SOS response</keyword>
<proteinExistence type="inferred from homology"/>
<accession>A4W4P9</accession>
<organism>
    <name type="scientific">Streptococcus suis (strain 98HAH33)</name>
    <dbReference type="NCBI Taxonomy" id="391296"/>
    <lineage>
        <taxon>Bacteria</taxon>
        <taxon>Bacillati</taxon>
        <taxon>Bacillota</taxon>
        <taxon>Bacilli</taxon>
        <taxon>Lactobacillales</taxon>
        <taxon>Streptococcaceae</taxon>
        <taxon>Streptococcus</taxon>
    </lineage>
</organism>
<dbReference type="EMBL" id="CP000408">
    <property type="protein sequence ID" value="ABP93338.1"/>
    <property type="molecule type" value="Genomic_DNA"/>
</dbReference>
<dbReference type="SMR" id="A4W4P9"/>
<dbReference type="KEGG" id="ssv:SSU98_2180"/>
<dbReference type="HOGENOM" id="CLU_040267_0_1_9"/>
<dbReference type="GO" id="GO:0005737">
    <property type="term" value="C:cytoplasm"/>
    <property type="evidence" value="ECO:0007669"/>
    <property type="project" value="UniProtKB-SubCell"/>
</dbReference>
<dbReference type="GO" id="GO:0005524">
    <property type="term" value="F:ATP binding"/>
    <property type="evidence" value="ECO:0007669"/>
    <property type="project" value="UniProtKB-UniRule"/>
</dbReference>
<dbReference type="GO" id="GO:0003697">
    <property type="term" value="F:single-stranded DNA binding"/>
    <property type="evidence" value="ECO:0007669"/>
    <property type="project" value="UniProtKB-UniRule"/>
</dbReference>
<dbReference type="GO" id="GO:0006260">
    <property type="term" value="P:DNA replication"/>
    <property type="evidence" value="ECO:0007669"/>
    <property type="project" value="UniProtKB-UniRule"/>
</dbReference>
<dbReference type="GO" id="GO:0000731">
    <property type="term" value="P:DNA synthesis involved in DNA repair"/>
    <property type="evidence" value="ECO:0007669"/>
    <property type="project" value="TreeGrafter"/>
</dbReference>
<dbReference type="GO" id="GO:0006302">
    <property type="term" value="P:double-strand break repair"/>
    <property type="evidence" value="ECO:0007669"/>
    <property type="project" value="TreeGrafter"/>
</dbReference>
<dbReference type="GO" id="GO:0009432">
    <property type="term" value="P:SOS response"/>
    <property type="evidence" value="ECO:0007669"/>
    <property type="project" value="UniProtKB-UniRule"/>
</dbReference>
<dbReference type="CDD" id="cd03242">
    <property type="entry name" value="ABC_RecF"/>
    <property type="match status" value="1"/>
</dbReference>
<dbReference type="FunFam" id="1.20.1050.90:FF:000002">
    <property type="entry name" value="DNA replication and repair protein RecF"/>
    <property type="match status" value="1"/>
</dbReference>
<dbReference type="Gene3D" id="3.40.50.300">
    <property type="entry name" value="P-loop containing nucleotide triphosphate hydrolases"/>
    <property type="match status" value="1"/>
</dbReference>
<dbReference type="Gene3D" id="1.20.1050.90">
    <property type="entry name" value="RecF/RecN/SMC, N-terminal domain"/>
    <property type="match status" value="1"/>
</dbReference>
<dbReference type="HAMAP" id="MF_00365">
    <property type="entry name" value="RecF"/>
    <property type="match status" value="1"/>
</dbReference>
<dbReference type="InterPro" id="IPR001238">
    <property type="entry name" value="DNA-binding_RecF"/>
</dbReference>
<dbReference type="InterPro" id="IPR018078">
    <property type="entry name" value="DNA-binding_RecF_CS"/>
</dbReference>
<dbReference type="InterPro" id="IPR027417">
    <property type="entry name" value="P-loop_NTPase"/>
</dbReference>
<dbReference type="InterPro" id="IPR003395">
    <property type="entry name" value="RecF/RecN/SMC_N"/>
</dbReference>
<dbReference type="InterPro" id="IPR042174">
    <property type="entry name" value="RecF_2"/>
</dbReference>
<dbReference type="NCBIfam" id="TIGR00611">
    <property type="entry name" value="recf"/>
    <property type="match status" value="1"/>
</dbReference>
<dbReference type="PANTHER" id="PTHR32182">
    <property type="entry name" value="DNA REPLICATION AND REPAIR PROTEIN RECF"/>
    <property type="match status" value="1"/>
</dbReference>
<dbReference type="PANTHER" id="PTHR32182:SF0">
    <property type="entry name" value="DNA REPLICATION AND REPAIR PROTEIN RECF"/>
    <property type="match status" value="1"/>
</dbReference>
<dbReference type="Pfam" id="PF02463">
    <property type="entry name" value="SMC_N"/>
    <property type="match status" value="1"/>
</dbReference>
<dbReference type="SUPFAM" id="SSF52540">
    <property type="entry name" value="P-loop containing nucleoside triphosphate hydrolases"/>
    <property type="match status" value="1"/>
</dbReference>
<dbReference type="PROSITE" id="PS00617">
    <property type="entry name" value="RECF_1"/>
    <property type="match status" value="1"/>
</dbReference>
<dbReference type="PROSITE" id="PS00618">
    <property type="entry name" value="RECF_2"/>
    <property type="match status" value="1"/>
</dbReference>
<protein>
    <recommendedName>
        <fullName evidence="1">DNA replication and repair protein RecF</fullName>
    </recommendedName>
</protein>